<feature type="chain" id="PRO_1000128428" description="Small ribosomal subunit protein uS14A">
    <location>
        <begin position="1"/>
        <end position="89"/>
    </location>
</feature>
<evidence type="ECO:0000255" key="1">
    <source>
        <dbReference type="HAMAP-Rule" id="MF_00537"/>
    </source>
</evidence>
<evidence type="ECO:0000305" key="2"/>
<sequence length="89" mass="10208">MAKKSKIAKAKRQEKLVQQYAVKRAALKAKGDYIGLSKLPRDSSPVRLHHRDVLDGRPHAYMRKFGMSRLNFRELAHKGQIPGVRKASW</sequence>
<protein>
    <recommendedName>
        <fullName evidence="1">Small ribosomal subunit protein uS14A</fullName>
    </recommendedName>
    <alternativeName>
        <fullName evidence="2">30S ribosomal protein S14</fullName>
    </alternativeName>
</protein>
<proteinExistence type="inferred from homology"/>
<keyword id="KW-1185">Reference proteome</keyword>
<keyword id="KW-0687">Ribonucleoprotein</keyword>
<keyword id="KW-0689">Ribosomal protein</keyword>
<keyword id="KW-0694">RNA-binding</keyword>
<keyword id="KW-0699">rRNA-binding</keyword>
<reference key="1">
    <citation type="journal article" date="2006" name="Proc. Natl. Acad. Sci. U.S.A.">
        <title>Comparative genomics of the lactic acid bacteria.</title>
        <authorList>
            <person name="Makarova K.S."/>
            <person name="Slesarev A."/>
            <person name="Wolf Y.I."/>
            <person name="Sorokin A."/>
            <person name="Mirkin B."/>
            <person name="Koonin E.V."/>
            <person name="Pavlov A."/>
            <person name="Pavlova N."/>
            <person name="Karamychev V."/>
            <person name="Polouchine N."/>
            <person name="Shakhova V."/>
            <person name="Grigoriev I."/>
            <person name="Lou Y."/>
            <person name="Rohksar D."/>
            <person name="Lucas S."/>
            <person name="Huang K."/>
            <person name="Goodstein D.M."/>
            <person name="Hawkins T."/>
            <person name="Plengvidhya V."/>
            <person name="Welker D."/>
            <person name="Hughes J."/>
            <person name="Goh Y."/>
            <person name="Benson A."/>
            <person name="Baldwin K."/>
            <person name="Lee J.-H."/>
            <person name="Diaz-Muniz I."/>
            <person name="Dosti B."/>
            <person name="Smeianov V."/>
            <person name="Wechter W."/>
            <person name="Barabote R."/>
            <person name="Lorca G."/>
            <person name="Altermann E."/>
            <person name="Barrangou R."/>
            <person name="Ganesan B."/>
            <person name="Xie Y."/>
            <person name="Rawsthorne H."/>
            <person name="Tamir D."/>
            <person name="Parker C."/>
            <person name="Breidt F."/>
            <person name="Broadbent J.R."/>
            <person name="Hutkins R."/>
            <person name="O'Sullivan D."/>
            <person name="Steele J."/>
            <person name="Unlu G."/>
            <person name="Saier M.H. Jr."/>
            <person name="Klaenhammer T."/>
            <person name="Richardson P."/>
            <person name="Kozyavkin S."/>
            <person name="Weimer B.C."/>
            <person name="Mills D.A."/>
        </authorList>
    </citation>
    <scope>NUCLEOTIDE SEQUENCE [LARGE SCALE GENOMIC DNA]</scope>
    <source>
        <strain>ATCC 334 / BCRC 17002 / CCUG 31169 / CIP 107868 / KCTC 3260 / NRRL B-441</strain>
    </source>
</reference>
<dbReference type="EMBL" id="CP000423">
    <property type="protein sequence ID" value="ABJ71161.1"/>
    <property type="molecule type" value="Genomic_DNA"/>
</dbReference>
<dbReference type="RefSeq" id="WP_011674890.1">
    <property type="nucleotide sequence ID" value="NC_008526.1"/>
</dbReference>
<dbReference type="RefSeq" id="YP_807603.1">
    <property type="nucleotide sequence ID" value="NC_008526.1"/>
</dbReference>
<dbReference type="SMR" id="Q035G1"/>
<dbReference type="STRING" id="321967.LSEI_2425"/>
<dbReference type="PaxDb" id="321967-LSEI_2425"/>
<dbReference type="KEGG" id="lca:LSEI_2425"/>
<dbReference type="PATRIC" id="fig|321967.11.peg.2384"/>
<dbReference type="HOGENOM" id="CLU_139869_0_0_9"/>
<dbReference type="Proteomes" id="UP000001651">
    <property type="component" value="Chromosome"/>
</dbReference>
<dbReference type="GO" id="GO:0005737">
    <property type="term" value="C:cytoplasm"/>
    <property type="evidence" value="ECO:0007669"/>
    <property type="project" value="UniProtKB-ARBA"/>
</dbReference>
<dbReference type="GO" id="GO:0015935">
    <property type="term" value="C:small ribosomal subunit"/>
    <property type="evidence" value="ECO:0007669"/>
    <property type="project" value="TreeGrafter"/>
</dbReference>
<dbReference type="GO" id="GO:0019843">
    <property type="term" value="F:rRNA binding"/>
    <property type="evidence" value="ECO:0007669"/>
    <property type="project" value="UniProtKB-UniRule"/>
</dbReference>
<dbReference type="GO" id="GO:0003735">
    <property type="term" value="F:structural constituent of ribosome"/>
    <property type="evidence" value="ECO:0007669"/>
    <property type="project" value="InterPro"/>
</dbReference>
<dbReference type="GO" id="GO:0006412">
    <property type="term" value="P:translation"/>
    <property type="evidence" value="ECO:0007669"/>
    <property type="project" value="UniProtKB-UniRule"/>
</dbReference>
<dbReference type="Gene3D" id="4.10.830.10">
    <property type="entry name" value="30s Ribosomal Protein S14, Chain N"/>
    <property type="match status" value="1"/>
</dbReference>
<dbReference type="HAMAP" id="MF_00537">
    <property type="entry name" value="Ribosomal_uS14_1"/>
    <property type="match status" value="1"/>
</dbReference>
<dbReference type="InterPro" id="IPR001209">
    <property type="entry name" value="Ribosomal_uS14"/>
</dbReference>
<dbReference type="InterPro" id="IPR023036">
    <property type="entry name" value="Ribosomal_uS14_bac/plastid"/>
</dbReference>
<dbReference type="InterPro" id="IPR043140">
    <property type="entry name" value="Ribosomal_uS14_sf"/>
</dbReference>
<dbReference type="NCBIfam" id="NF006477">
    <property type="entry name" value="PRK08881.1"/>
    <property type="match status" value="1"/>
</dbReference>
<dbReference type="PANTHER" id="PTHR19836">
    <property type="entry name" value="30S RIBOSOMAL PROTEIN S14"/>
    <property type="match status" value="1"/>
</dbReference>
<dbReference type="PANTHER" id="PTHR19836:SF19">
    <property type="entry name" value="SMALL RIBOSOMAL SUBUNIT PROTEIN US14M"/>
    <property type="match status" value="1"/>
</dbReference>
<dbReference type="Pfam" id="PF00253">
    <property type="entry name" value="Ribosomal_S14"/>
    <property type="match status" value="1"/>
</dbReference>
<dbReference type="SUPFAM" id="SSF57716">
    <property type="entry name" value="Glucocorticoid receptor-like (DNA-binding domain)"/>
    <property type="match status" value="1"/>
</dbReference>
<gene>
    <name evidence="1" type="primary">rpsN</name>
    <name type="ordered locus">LSEI_2425</name>
</gene>
<accession>Q035G1</accession>
<comment type="function">
    <text evidence="1">Binds 16S rRNA, required for the assembly of 30S particles and may also be responsible for determining the conformation of the 16S rRNA at the A site.</text>
</comment>
<comment type="subunit">
    <text evidence="1">Part of the 30S ribosomal subunit. Contacts proteins S3 and S10.</text>
</comment>
<comment type="similarity">
    <text evidence="1">Belongs to the universal ribosomal protein uS14 family.</text>
</comment>
<name>RS14_LACP3</name>
<organism>
    <name type="scientific">Lacticaseibacillus paracasei (strain ATCC 334 / BCRC 17002 / CCUG 31169 / CIP 107868 / KCTC 3260 / NRRL B-441)</name>
    <name type="common">Lactobacillus paracasei</name>
    <dbReference type="NCBI Taxonomy" id="321967"/>
    <lineage>
        <taxon>Bacteria</taxon>
        <taxon>Bacillati</taxon>
        <taxon>Bacillota</taxon>
        <taxon>Bacilli</taxon>
        <taxon>Lactobacillales</taxon>
        <taxon>Lactobacillaceae</taxon>
        <taxon>Lacticaseibacillus</taxon>
    </lineage>
</organism>